<evidence type="ECO:0000255" key="1">
    <source>
        <dbReference type="HAMAP-Rule" id="MF_00206"/>
    </source>
</evidence>
<evidence type="ECO:0000255" key="2">
    <source>
        <dbReference type="PROSITE-ProRule" id="PRU01266"/>
    </source>
</evidence>
<organism>
    <name type="scientific">Trichlorobacter lovleyi (strain ATCC BAA-1151 / DSM 17278 / SZ)</name>
    <name type="common">Geobacter lovleyi</name>
    <dbReference type="NCBI Taxonomy" id="398767"/>
    <lineage>
        <taxon>Bacteria</taxon>
        <taxon>Pseudomonadati</taxon>
        <taxon>Thermodesulfobacteriota</taxon>
        <taxon>Desulfuromonadia</taxon>
        <taxon>Geobacterales</taxon>
        <taxon>Geobacteraceae</taxon>
        <taxon>Trichlorobacter</taxon>
    </lineage>
</organism>
<gene>
    <name evidence="1" type="primary">lipA</name>
    <name type="ordered locus">Glov_2662</name>
</gene>
<protein>
    <recommendedName>
        <fullName evidence="1">Lipoyl synthase</fullName>
        <ecNumber evidence="1">2.8.1.8</ecNumber>
    </recommendedName>
    <alternativeName>
        <fullName evidence="1">Lip-syn</fullName>
        <shortName evidence="1">LS</shortName>
    </alternativeName>
    <alternativeName>
        <fullName evidence="1">Lipoate synthase</fullName>
    </alternativeName>
    <alternativeName>
        <fullName evidence="1">Lipoic acid synthase</fullName>
    </alternativeName>
    <alternativeName>
        <fullName evidence="1">Sulfur insertion protein LipA</fullName>
    </alternativeName>
</protein>
<accession>B3E6X0</accession>
<keyword id="KW-0004">4Fe-4S</keyword>
<keyword id="KW-0963">Cytoplasm</keyword>
<keyword id="KW-0408">Iron</keyword>
<keyword id="KW-0411">Iron-sulfur</keyword>
<keyword id="KW-0479">Metal-binding</keyword>
<keyword id="KW-1185">Reference proteome</keyword>
<keyword id="KW-0949">S-adenosyl-L-methionine</keyword>
<keyword id="KW-0808">Transferase</keyword>
<name>LIPA_TRIL1</name>
<dbReference type="EC" id="2.8.1.8" evidence="1"/>
<dbReference type="EMBL" id="CP001089">
    <property type="protein sequence ID" value="ACD96375.1"/>
    <property type="molecule type" value="Genomic_DNA"/>
</dbReference>
<dbReference type="RefSeq" id="WP_012470706.1">
    <property type="nucleotide sequence ID" value="NC_010814.1"/>
</dbReference>
<dbReference type="SMR" id="B3E6X0"/>
<dbReference type="STRING" id="398767.Glov_2662"/>
<dbReference type="KEGG" id="glo:Glov_2662"/>
<dbReference type="eggNOG" id="COG0320">
    <property type="taxonomic scope" value="Bacteria"/>
</dbReference>
<dbReference type="HOGENOM" id="CLU_033144_2_1_7"/>
<dbReference type="OrthoDB" id="9787898at2"/>
<dbReference type="UniPathway" id="UPA00538">
    <property type="reaction ID" value="UER00593"/>
</dbReference>
<dbReference type="Proteomes" id="UP000002420">
    <property type="component" value="Chromosome"/>
</dbReference>
<dbReference type="GO" id="GO:0005737">
    <property type="term" value="C:cytoplasm"/>
    <property type="evidence" value="ECO:0007669"/>
    <property type="project" value="UniProtKB-SubCell"/>
</dbReference>
<dbReference type="GO" id="GO:0051539">
    <property type="term" value="F:4 iron, 4 sulfur cluster binding"/>
    <property type="evidence" value="ECO:0007669"/>
    <property type="project" value="UniProtKB-UniRule"/>
</dbReference>
<dbReference type="GO" id="GO:0016992">
    <property type="term" value="F:lipoate synthase activity"/>
    <property type="evidence" value="ECO:0007669"/>
    <property type="project" value="UniProtKB-UniRule"/>
</dbReference>
<dbReference type="GO" id="GO:0046872">
    <property type="term" value="F:metal ion binding"/>
    <property type="evidence" value="ECO:0007669"/>
    <property type="project" value="UniProtKB-KW"/>
</dbReference>
<dbReference type="CDD" id="cd01335">
    <property type="entry name" value="Radical_SAM"/>
    <property type="match status" value="1"/>
</dbReference>
<dbReference type="FunFam" id="3.20.20.70:FF:000186">
    <property type="entry name" value="Lipoyl synthase"/>
    <property type="match status" value="1"/>
</dbReference>
<dbReference type="Gene3D" id="3.20.20.70">
    <property type="entry name" value="Aldolase class I"/>
    <property type="match status" value="1"/>
</dbReference>
<dbReference type="HAMAP" id="MF_00206">
    <property type="entry name" value="Lipoyl_synth"/>
    <property type="match status" value="1"/>
</dbReference>
<dbReference type="InterPro" id="IPR013785">
    <property type="entry name" value="Aldolase_TIM"/>
</dbReference>
<dbReference type="InterPro" id="IPR006638">
    <property type="entry name" value="Elp3/MiaA/NifB-like_rSAM"/>
</dbReference>
<dbReference type="InterPro" id="IPR003698">
    <property type="entry name" value="Lipoyl_synth"/>
</dbReference>
<dbReference type="InterPro" id="IPR007197">
    <property type="entry name" value="rSAM"/>
</dbReference>
<dbReference type="NCBIfam" id="TIGR00510">
    <property type="entry name" value="lipA"/>
    <property type="match status" value="1"/>
</dbReference>
<dbReference type="NCBIfam" id="NF004019">
    <property type="entry name" value="PRK05481.1"/>
    <property type="match status" value="1"/>
</dbReference>
<dbReference type="NCBIfam" id="NF009544">
    <property type="entry name" value="PRK12928.1"/>
    <property type="match status" value="1"/>
</dbReference>
<dbReference type="PANTHER" id="PTHR10949">
    <property type="entry name" value="LIPOYL SYNTHASE"/>
    <property type="match status" value="1"/>
</dbReference>
<dbReference type="PANTHER" id="PTHR10949:SF0">
    <property type="entry name" value="LIPOYL SYNTHASE, MITOCHONDRIAL"/>
    <property type="match status" value="1"/>
</dbReference>
<dbReference type="Pfam" id="PF04055">
    <property type="entry name" value="Radical_SAM"/>
    <property type="match status" value="1"/>
</dbReference>
<dbReference type="PIRSF" id="PIRSF005963">
    <property type="entry name" value="Lipoyl_synth"/>
    <property type="match status" value="1"/>
</dbReference>
<dbReference type="SFLD" id="SFLDF00271">
    <property type="entry name" value="lipoyl_synthase"/>
    <property type="match status" value="1"/>
</dbReference>
<dbReference type="SFLD" id="SFLDG01058">
    <property type="entry name" value="lipoyl_synthase_like"/>
    <property type="match status" value="1"/>
</dbReference>
<dbReference type="SMART" id="SM00729">
    <property type="entry name" value="Elp3"/>
    <property type="match status" value="1"/>
</dbReference>
<dbReference type="SUPFAM" id="SSF102114">
    <property type="entry name" value="Radical SAM enzymes"/>
    <property type="match status" value="1"/>
</dbReference>
<dbReference type="PROSITE" id="PS51918">
    <property type="entry name" value="RADICAL_SAM"/>
    <property type="match status" value="1"/>
</dbReference>
<reference key="1">
    <citation type="submission" date="2008-05" db="EMBL/GenBank/DDBJ databases">
        <title>Complete sequence of chromosome of Geobacter lovleyi SZ.</title>
        <authorList>
            <consortium name="US DOE Joint Genome Institute"/>
            <person name="Lucas S."/>
            <person name="Copeland A."/>
            <person name="Lapidus A."/>
            <person name="Glavina del Rio T."/>
            <person name="Dalin E."/>
            <person name="Tice H."/>
            <person name="Bruce D."/>
            <person name="Goodwin L."/>
            <person name="Pitluck S."/>
            <person name="Chertkov O."/>
            <person name="Meincke L."/>
            <person name="Brettin T."/>
            <person name="Detter J.C."/>
            <person name="Han C."/>
            <person name="Tapia R."/>
            <person name="Kuske C.R."/>
            <person name="Schmutz J."/>
            <person name="Larimer F."/>
            <person name="Land M."/>
            <person name="Hauser L."/>
            <person name="Kyrpides N."/>
            <person name="Mikhailova N."/>
            <person name="Sung Y."/>
            <person name="Fletcher K.E."/>
            <person name="Ritalahti K.M."/>
            <person name="Loeffler F.E."/>
            <person name="Richardson P."/>
        </authorList>
    </citation>
    <scope>NUCLEOTIDE SEQUENCE [LARGE SCALE GENOMIC DNA]</scope>
    <source>
        <strain>ATCC BAA-1151 / DSM 17278 / SZ</strain>
    </source>
</reference>
<sequence length="281" mass="30643">MKIQRKPEWLRKKVPQGEQAAMRGLLSELKLNTVCQQALCPNIAECFGCGQATFLILGRDCTRQCSFCNVDKAPRPQAPDADEPRRLAEAVLRLKLSHVVITSPTRDDLADGGAGHYAATVAAVREVSPGTAVELLVPDFGGDHAALATVLAAQPSILAHNLETVPRLYEVRKGADYQRSLDLLQQAALRAPAIPTKSGIMLGLGEELDEVRAVLQDLRRVGCSYLSLGQYLAPSKRHQPVVAYIPPQQFDLLRDEALALGFRHVESGPYVRSSYHAANYA</sequence>
<comment type="function">
    <text evidence="1">Catalyzes the radical-mediated insertion of two sulfur atoms into the C-6 and C-8 positions of the octanoyl moiety bound to the lipoyl domains of lipoate-dependent enzymes, thereby converting the octanoylated domains into lipoylated derivatives.</text>
</comment>
<comment type="catalytic activity">
    <reaction evidence="1">
        <text>[[Fe-S] cluster scaffold protein carrying a second [4Fe-4S](2+) cluster] + N(6)-octanoyl-L-lysyl-[protein] + 2 oxidized [2Fe-2S]-[ferredoxin] + 2 S-adenosyl-L-methionine + 4 H(+) = [[Fe-S] cluster scaffold protein] + N(6)-[(R)-dihydrolipoyl]-L-lysyl-[protein] + 4 Fe(3+) + 2 hydrogen sulfide + 2 5'-deoxyadenosine + 2 L-methionine + 2 reduced [2Fe-2S]-[ferredoxin]</text>
        <dbReference type="Rhea" id="RHEA:16585"/>
        <dbReference type="Rhea" id="RHEA-COMP:9928"/>
        <dbReference type="Rhea" id="RHEA-COMP:10000"/>
        <dbReference type="Rhea" id="RHEA-COMP:10001"/>
        <dbReference type="Rhea" id="RHEA-COMP:10475"/>
        <dbReference type="Rhea" id="RHEA-COMP:14568"/>
        <dbReference type="Rhea" id="RHEA-COMP:14569"/>
        <dbReference type="ChEBI" id="CHEBI:15378"/>
        <dbReference type="ChEBI" id="CHEBI:17319"/>
        <dbReference type="ChEBI" id="CHEBI:29034"/>
        <dbReference type="ChEBI" id="CHEBI:29919"/>
        <dbReference type="ChEBI" id="CHEBI:33722"/>
        <dbReference type="ChEBI" id="CHEBI:33737"/>
        <dbReference type="ChEBI" id="CHEBI:33738"/>
        <dbReference type="ChEBI" id="CHEBI:57844"/>
        <dbReference type="ChEBI" id="CHEBI:59789"/>
        <dbReference type="ChEBI" id="CHEBI:78809"/>
        <dbReference type="ChEBI" id="CHEBI:83100"/>
        <dbReference type="EC" id="2.8.1.8"/>
    </reaction>
</comment>
<comment type="cofactor">
    <cofactor evidence="1">
        <name>[4Fe-4S] cluster</name>
        <dbReference type="ChEBI" id="CHEBI:49883"/>
    </cofactor>
    <text evidence="1">Binds 2 [4Fe-4S] clusters per subunit. One cluster is coordinated with 3 cysteines and an exchangeable S-adenosyl-L-methionine.</text>
</comment>
<comment type="pathway">
    <text evidence="1">Protein modification; protein lipoylation via endogenous pathway; protein N(6)-(lipoyl)lysine from octanoyl-[acyl-carrier-protein]: step 2/2.</text>
</comment>
<comment type="subcellular location">
    <subcellularLocation>
        <location evidence="1">Cytoplasm</location>
    </subcellularLocation>
</comment>
<comment type="similarity">
    <text evidence="1">Belongs to the radical SAM superfamily. Lipoyl synthase family.</text>
</comment>
<feature type="chain" id="PRO_1000099606" description="Lipoyl synthase">
    <location>
        <begin position="1"/>
        <end position="281"/>
    </location>
</feature>
<feature type="domain" description="Radical SAM core" evidence="2">
    <location>
        <begin position="47"/>
        <end position="263"/>
    </location>
</feature>
<feature type="binding site" evidence="1">
    <location>
        <position position="35"/>
    </location>
    <ligand>
        <name>[4Fe-4S] cluster</name>
        <dbReference type="ChEBI" id="CHEBI:49883"/>
        <label>1</label>
    </ligand>
</feature>
<feature type="binding site" evidence="1">
    <location>
        <position position="40"/>
    </location>
    <ligand>
        <name>[4Fe-4S] cluster</name>
        <dbReference type="ChEBI" id="CHEBI:49883"/>
        <label>1</label>
    </ligand>
</feature>
<feature type="binding site" evidence="1">
    <location>
        <position position="46"/>
    </location>
    <ligand>
        <name>[4Fe-4S] cluster</name>
        <dbReference type="ChEBI" id="CHEBI:49883"/>
        <label>1</label>
    </ligand>
</feature>
<feature type="binding site" evidence="1">
    <location>
        <position position="61"/>
    </location>
    <ligand>
        <name>[4Fe-4S] cluster</name>
        <dbReference type="ChEBI" id="CHEBI:49883"/>
        <label>2</label>
        <note>4Fe-4S-S-AdoMet</note>
    </ligand>
</feature>
<feature type="binding site" evidence="1">
    <location>
        <position position="65"/>
    </location>
    <ligand>
        <name>[4Fe-4S] cluster</name>
        <dbReference type="ChEBI" id="CHEBI:49883"/>
        <label>2</label>
        <note>4Fe-4S-S-AdoMet</note>
    </ligand>
</feature>
<feature type="binding site" evidence="1">
    <location>
        <position position="68"/>
    </location>
    <ligand>
        <name>[4Fe-4S] cluster</name>
        <dbReference type="ChEBI" id="CHEBI:49883"/>
        <label>2</label>
        <note>4Fe-4S-S-AdoMet</note>
    </ligand>
</feature>
<feature type="binding site" evidence="1">
    <location>
        <position position="274"/>
    </location>
    <ligand>
        <name>[4Fe-4S] cluster</name>
        <dbReference type="ChEBI" id="CHEBI:49883"/>
        <label>1</label>
    </ligand>
</feature>
<proteinExistence type="inferred from homology"/>